<protein>
    <recommendedName>
        <fullName evidence="1">Replication restart protein PriB</fullName>
    </recommendedName>
</protein>
<reference key="1">
    <citation type="journal article" date="2000" name="Nature">
        <title>Complete DNA sequence of a serogroup A strain of Neisseria meningitidis Z2491.</title>
        <authorList>
            <person name="Parkhill J."/>
            <person name="Achtman M."/>
            <person name="James K.D."/>
            <person name="Bentley S.D."/>
            <person name="Churcher C.M."/>
            <person name="Klee S.R."/>
            <person name="Morelli G."/>
            <person name="Basham D."/>
            <person name="Brown D."/>
            <person name="Chillingworth T."/>
            <person name="Davies R.M."/>
            <person name="Davis P."/>
            <person name="Devlin K."/>
            <person name="Feltwell T."/>
            <person name="Hamlin N."/>
            <person name="Holroyd S."/>
            <person name="Jagels K."/>
            <person name="Leather S."/>
            <person name="Moule S."/>
            <person name="Mungall K.L."/>
            <person name="Quail M.A."/>
            <person name="Rajandream M.A."/>
            <person name="Rutherford K.M."/>
            <person name="Simmonds M."/>
            <person name="Skelton J."/>
            <person name="Whitehead S."/>
            <person name="Spratt B.G."/>
            <person name="Barrell B.G."/>
        </authorList>
    </citation>
    <scope>NUCLEOTIDE SEQUENCE [LARGE SCALE GENOMIC DNA]</scope>
    <source>
        <strain>DSM 15465 / Z2491</strain>
    </source>
</reference>
<keyword id="KW-0235">DNA replication</keyword>
<keyword id="KW-0238">DNA-binding</keyword>
<keyword id="KW-0639">Primosome</keyword>
<sequence length="100" mass="11623">MGFNNLVSLAVLIEKVFPIRYTPAGIPVLDIILKHESWQEENGQQCLVQLEIPARILGRQAEEWQYRQGVYVHVEGFLAQKSRRSLMPMLRIQNIQEYKG</sequence>
<accession>Q9JU25</accession>
<accession>A1ISC6</accession>
<organism>
    <name type="scientific">Neisseria meningitidis serogroup A / serotype 4A (strain DSM 15465 / Z2491)</name>
    <dbReference type="NCBI Taxonomy" id="122587"/>
    <lineage>
        <taxon>Bacteria</taxon>
        <taxon>Pseudomonadati</taxon>
        <taxon>Pseudomonadota</taxon>
        <taxon>Betaproteobacteria</taxon>
        <taxon>Neisseriales</taxon>
        <taxon>Neisseriaceae</taxon>
        <taxon>Neisseria</taxon>
    </lineage>
</organism>
<name>PRIB_NEIMA</name>
<dbReference type="EMBL" id="AL157959">
    <property type="protein sequence ID" value="CAM08682.1"/>
    <property type="molecule type" value="Genomic_DNA"/>
</dbReference>
<dbReference type="PIR" id="C81845">
    <property type="entry name" value="C81845"/>
</dbReference>
<dbReference type="RefSeq" id="WP_010981204.1">
    <property type="nucleotide sequence ID" value="NC_003116.1"/>
</dbReference>
<dbReference type="SMR" id="Q9JU25"/>
<dbReference type="EnsemblBacteria" id="CAM08682">
    <property type="protein sequence ID" value="CAM08682"/>
    <property type="gene ID" value="NMA1536"/>
</dbReference>
<dbReference type="GeneID" id="93385878"/>
<dbReference type="KEGG" id="nma:NMA1536"/>
<dbReference type="HOGENOM" id="CLU_166075_1_2_4"/>
<dbReference type="Proteomes" id="UP000000626">
    <property type="component" value="Chromosome"/>
</dbReference>
<dbReference type="GO" id="GO:1990077">
    <property type="term" value="C:primosome complex"/>
    <property type="evidence" value="ECO:0007669"/>
    <property type="project" value="UniProtKB-KW"/>
</dbReference>
<dbReference type="GO" id="GO:0003697">
    <property type="term" value="F:single-stranded DNA binding"/>
    <property type="evidence" value="ECO:0007669"/>
    <property type="project" value="UniProtKB-UniRule"/>
</dbReference>
<dbReference type="GO" id="GO:0006269">
    <property type="term" value="P:DNA replication, synthesis of primer"/>
    <property type="evidence" value="ECO:0007669"/>
    <property type="project" value="UniProtKB-KW"/>
</dbReference>
<dbReference type="FunFam" id="2.40.50.140:FF:000357">
    <property type="entry name" value="Primosomal replication protein N"/>
    <property type="match status" value="1"/>
</dbReference>
<dbReference type="Gene3D" id="2.40.50.140">
    <property type="entry name" value="Nucleic acid-binding proteins"/>
    <property type="match status" value="1"/>
</dbReference>
<dbReference type="HAMAP" id="MF_00720">
    <property type="entry name" value="PriB"/>
    <property type="match status" value="1"/>
</dbReference>
<dbReference type="InterPro" id="IPR012340">
    <property type="entry name" value="NA-bd_OB-fold"/>
</dbReference>
<dbReference type="InterPro" id="IPR000424">
    <property type="entry name" value="Primosome_PriB/ssb"/>
</dbReference>
<dbReference type="InterPro" id="IPR023646">
    <property type="entry name" value="Prisomal_replication_PriB"/>
</dbReference>
<dbReference type="NCBIfam" id="TIGR04418">
    <property type="entry name" value="PriB_gamma"/>
    <property type="match status" value="1"/>
</dbReference>
<dbReference type="Pfam" id="PF22657">
    <property type="entry name" value="SSB_1"/>
    <property type="match status" value="1"/>
</dbReference>
<dbReference type="PIRSF" id="PIRSF003135">
    <property type="entry name" value="Primosomal_n"/>
    <property type="match status" value="1"/>
</dbReference>
<dbReference type="SUPFAM" id="SSF50249">
    <property type="entry name" value="Nucleic acid-binding proteins"/>
    <property type="match status" value="1"/>
</dbReference>
<dbReference type="PROSITE" id="PS50935">
    <property type="entry name" value="SSB"/>
    <property type="match status" value="1"/>
</dbReference>
<comment type="function">
    <text evidence="1">Involved in the restart of stalled replication forks, which reloads the replicative helicase on sites other than the origin of replication; the PriA-PriB pathway is the major replication restart pathway. During primosome assembly it facilitates complex formation between PriA and DnaT on DNA; stabilizes PriA on DNA. Stimulates the DNA unwinding activity of PriA helicase.</text>
</comment>
<comment type="subunit">
    <text evidence="1">Homodimer. Interacts with PriA and DnaT. Component of the replication restart primosome. Primosome assembly occurs via a 'hand-off' mechanism. PriA binds to replication forks, subsequently PriB then DnaT bind; DnaT then displaces ssDNA to generate the helicase loading substrate.</text>
</comment>
<comment type="similarity">
    <text evidence="1">Belongs to the PriB family.</text>
</comment>
<feature type="chain" id="PRO_0000199054" description="Replication restart protein PriB">
    <location>
        <begin position="1"/>
        <end position="100"/>
    </location>
</feature>
<feature type="domain" description="SSB" evidence="1">
    <location>
        <begin position="1"/>
        <end position="99"/>
    </location>
</feature>
<proteinExistence type="inferred from homology"/>
<evidence type="ECO:0000255" key="1">
    <source>
        <dbReference type="HAMAP-Rule" id="MF_00720"/>
    </source>
</evidence>
<gene>
    <name evidence="1" type="primary">priB</name>
    <name type="ordered locus">NMA1536</name>
</gene>